<feature type="chain" id="PRO_0000223988" description="Large ribosomal subunit protein uL6">
    <location>
        <begin position="1"/>
        <end position="178"/>
    </location>
</feature>
<dbReference type="EMBL" id="BX571857">
    <property type="protein sequence ID" value="CAG43937.1"/>
    <property type="molecule type" value="Genomic_DNA"/>
</dbReference>
<dbReference type="RefSeq" id="WP_000091975.1">
    <property type="nucleotide sequence ID" value="NC_002953.3"/>
</dbReference>
<dbReference type="SMR" id="Q6G786"/>
<dbReference type="KEGG" id="sas:SAS2126"/>
<dbReference type="HOGENOM" id="CLU_065464_1_2_9"/>
<dbReference type="GO" id="GO:0022625">
    <property type="term" value="C:cytosolic large ribosomal subunit"/>
    <property type="evidence" value="ECO:0007669"/>
    <property type="project" value="TreeGrafter"/>
</dbReference>
<dbReference type="GO" id="GO:0019843">
    <property type="term" value="F:rRNA binding"/>
    <property type="evidence" value="ECO:0007669"/>
    <property type="project" value="UniProtKB-UniRule"/>
</dbReference>
<dbReference type="GO" id="GO:0003735">
    <property type="term" value="F:structural constituent of ribosome"/>
    <property type="evidence" value="ECO:0007669"/>
    <property type="project" value="InterPro"/>
</dbReference>
<dbReference type="GO" id="GO:0002181">
    <property type="term" value="P:cytoplasmic translation"/>
    <property type="evidence" value="ECO:0007669"/>
    <property type="project" value="TreeGrafter"/>
</dbReference>
<dbReference type="FunFam" id="3.90.930.12:FF:000001">
    <property type="entry name" value="50S ribosomal protein L6"/>
    <property type="match status" value="1"/>
</dbReference>
<dbReference type="FunFam" id="3.90.930.12:FF:000002">
    <property type="entry name" value="50S ribosomal protein L6"/>
    <property type="match status" value="1"/>
</dbReference>
<dbReference type="Gene3D" id="3.90.930.12">
    <property type="entry name" value="Ribosomal protein L6, alpha-beta domain"/>
    <property type="match status" value="2"/>
</dbReference>
<dbReference type="HAMAP" id="MF_01365_B">
    <property type="entry name" value="Ribosomal_uL6_B"/>
    <property type="match status" value="1"/>
</dbReference>
<dbReference type="InterPro" id="IPR000702">
    <property type="entry name" value="Ribosomal_uL6-like"/>
</dbReference>
<dbReference type="InterPro" id="IPR036789">
    <property type="entry name" value="Ribosomal_uL6-like_a/b-dom_sf"/>
</dbReference>
<dbReference type="InterPro" id="IPR020040">
    <property type="entry name" value="Ribosomal_uL6_a/b-dom"/>
</dbReference>
<dbReference type="InterPro" id="IPR019906">
    <property type="entry name" value="Ribosomal_uL6_bac-type"/>
</dbReference>
<dbReference type="InterPro" id="IPR002358">
    <property type="entry name" value="Ribosomal_uL6_CS"/>
</dbReference>
<dbReference type="NCBIfam" id="TIGR03654">
    <property type="entry name" value="L6_bact"/>
    <property type="match status" value="1"/>
</dbReference>
<dbReference type="PANTHER" id="PTHR11655">
    <property type="entry name" value="60S/50S RIBOSOMAL PROTEIN L6/L9"/>
    <property type="match status" value="1"/>
</dbReference>
<dbReference type="PANTHER" id="PTHR11655:SF14">
    <property type="entry name" value="LARGE RIBOSOMAL SUBUNIT PROTEIN UL6M"/>
    <property type="match status" value="1"/>
</dbReference>
<dbReference type="Pfam" id="PF00347">
    <property type="entry name" value="Ribosomal_L6"/>
    <property type="match status" value="2"/>
</dbReference>
<dbReference type="PIRSF" id="PIRSF002162">
    <property type="entry name" value="Ribosomal_L6"/>
    <property type="match status" value="1"/>
</dbReference>
<dbReference type="PRINTS" id="PR00059">
    <property type="entry name" value="RIBOSOMALL6"/>
</dbReference>
<dbReference type="SUPFAM" id="SSF56053">
    <property type="entry name" value="Ribosomal protein L6"/>
    <property type="match status" value="2"/>
</dbReference>
<dbReference type="PROSITE" id="PS00525">
    <property type="entry name" value="RIBOSOMAL_L6_1"/>
    <property type="match status" value="1"/>
</dbReference>
<name>RL6_STAAS</name>
<accession>Q6G786</accession>
<proteinExistence type="inferred from homology"/>
<evidence type="ECO:0000255" key="1">
    <source>
        <dbReference type="HAMAP-Rule" id="MF_01365"/>
    </source>
</evidence>
<evidence type="ECO:0000305" key="2"/>
<sequence>MSRVGKKIIDIPSDVTVTFDGNHVTVKGPKGELSRTLNERMTFKQEENTIEVVRPSDSKEDRTNHGTTRALLNNMVQGVSQGYVKVLELVGVGYRAQMQGKDLILNVGYSHPVEIKAEENITFSVEKNTVVKVEGISKEQVGALASNIRSVRPPEPYKGKGIRYQGEYVRRKEGKTGK</sequence>
<reference key="1">
    <citation type="journal article" date="2004" name="Proc. Natl. Acad. Sci. U.S.A.">
        <title>Complete genomes of two clinical Staphylococcus aureus strains: evidence for the rapid evolution of virulence and drug resistance.</title>
        <authorList>
            <person name="Holden M.T.G."/>
            <person name="Feil E.J."/>
            <person name="Lindsay J.A."/>
            <person name="Peacock S.J."/>
            <person name="Day N.P.J."/>
            <person name="Enright M.C."/>
            <person name="Foster T.J."/>
            <person name="Moore C.E."/>
            <person name="Hurst L."/>
            <person name="Atkin R."/>
            <person name="Barron A."/>
            <person name="Bason N."/>
            <person name="Bentley S.D."/>
            <person name="Chillingworth C."/>
            <person name="Chillingworth T."/>
            <person name="Churcher C."/>
            <person name="Clark L."/>
            <person name="Corton C."/>
            <person name="Cronin A."/>
            <person name="Doggett J."/>
            <person name="Dowd L."/>
            <person name="Feltwell T."/>
            <person name="Hance Z."/>
            <person name="Harris B."/>
            <person name="Hauser H."/>
            <person name="Holroyd S."/>
            <person name="Jagels K."/>
            <person name="James K.D."/>
            <person name="Lennard N."/>
            <person name="Line A."/>
            <person name="Mayes R."/>
            <person name="Moule S."/>
            <person name="Mungall K."/>
            <person name="Ormond D."/>
            <person name="Quail M.A."/>
            <person name="Rabbinowitsch E."/>
            <person name="Rutherford K.M."/>
            <person name="Sanders M."/>
            <person name="Sharp S."/>
            <person name="Simmonds M."/>
            <person name="Stevens K."/>
            <person name="Whitehead S."/>
            <person name="Barrell B.G."/>
            <person name="Spratt B.G."/>
            <person name="Parkhill J."/>
        </authorList>
    </citation>
    <scope>NUCLEOTIDE SEQUENCE [LARGE SCALE GENOMIC DNA]</scope>
    <source>
        <strain>MSSA476</strain>
    </source>
</reference>
<gene>
    <name evidence="1" type="primary">rplF</name>
    <name type="ordered locus">SAS2126</name>
</gene>
<protein>
    <recommendedName>
        <fullName evidence="1">Large ribosomal subunit protein uL6</fullName>
    </recommendedName>
    <alternativeName>
        <fullName evidence="2">50S ribosomal protein L6</fullName>
    </alternativeName>
</protein>
<keyword id="KW-0687">Ribonucleoprotein</keyword>
<keyword id="KW-0689">Ribosomal protein</keyword>
<keyword id="KW-0694">RNA-binding</keyword>
<keyword id="KW-0699">rRNA-binding</keyword>
<comment type="function">
    <text evidence="1">This protein binds to the 23S rRNA, and is important in its secondary structure. It is located near the subunit interface in the base of the L7/L12 stalk, and near the tRNA binding site of the peptidyltransferase center.</text>
</comment>
<comment type="subunit">
    <text evidence="1">Part of the 50S ribosomal subunit.</text>
</comment>
<comment type="similarity">
    <text evidence="1">Belongs to the universal ribosomal protein uL6 family.</text>
</comment>
<organism>
    <name type="scientific">Staphylococcus aureus (strain MSSA476)</name>
    <dbReference type="NCBI Taxonomy" id="282459"/>
    <lineage>
        <taxon>Bacteria</taxon>
        <taxon>Bacillati</taxon>
        <taxon>Bacillota</taxon>
        <taxon>Bacilli</taxon>
        <taxon>Bacillales</taxon>
        <taxon>Staphylococcaceae</taxon>
        <taxon>Staphylococcus</taxon>
    </lineage>
</organism>